<gene>
    <name type="primary">PEPP</name>
    <name type="ORF">UREG_00910</name>
</gene>
<sequence>MDPAVDKILAGKYPAKQHARRVAEALKAAGQDGSGVIYLEGTKTRMAEDSDEAVPFRQRRNFYYLSGCDLSDSYVTYNIDKDELVLYIPPADPDEVIWTGLPMSAEEALKVYDVDVVLPSTEVNAQLAHCCANKDSKPKRVYAIPDRVCPETTFLPFDDTNWDVLAQAIEQCRKVKDEYEIALLKRANEISAQAHLAVMKASKTAKNERELEAIFRSTCLYYDSRQQSYGPIMARGVNGATLHYQTNNMDIDDPVTGERPSLLIDAGGEYRMYASDITRAIPLSGKFSPEARQIYDIVLDMQMQCFGMIKAGVAWDDVHALAHKVAIKGLVNLGILRGSEEELFQKGVSVAFFPHGLGHYMGMDTHDVGGNPNFADPNPMFKYLRLRGTLSPNEVVTVEPGVYFCRFIIEPYLKSPELSKYIDSAVLDKYWKVGGVRIEDNLVVTQDGFQNLTTVPKDAEEVERIVQQGVPAFVLVSINDI</sequence>
<name>AMPP3_UNCRE</name>
<comment type="function">
    <text evidence="1">Catalyzes the removal of a penultimate prolyl residue from the N-termini of peptides.</text>
</comment>
<comment type="catalytic activity">
    <reaction>
        <text>Release of any N-terminal amino acid, including proline, that is linked to proline, even from a dipeptide or tripeptide.</text>
        <dbReference type="EC" id="3.4.11.9"/>
    </reaction>
</comment>
<comment type="cofactor">
    <cofactor evidence="1">
        <name>Mn(2+)</name>
        <dbReference type="ChEBI" id="CHEBI:29035"/>
    </cofactor>
    <text evidence="1">Binds 2 manganese ions per subunit.</text>
</comment>
<comment type="similarity">
    <text evidence="2">Belongs to the peptidase M24B family.</text>
</comment>
<proteinExistence type="inferred from homology"/>
<feature type="chain" id="PRO_0000411891" description="Probable Xaa-Pro aminopeptidase PEPP">
    <location>
        <begin position="1"/>
        <end position="481"/>
    </location>
</feature>
<feature type="binding site" evidence="1">
    <location>
        <position position="265"/>
    </location>
    <ligand>
        <name>Mn(2+)</name>
        <dbReference type="ChEBI" id="CHEBI:29035"/>
        <label>2</label>
    </ligand>
</feature>
<feature type="binding site" evidence="1">
    <location>
        <position position="276"/>
    </location>
    <ligand>
        <name>Mn(2+)</name>
        <dbReference type="ChEBI" id="CHEBI:29035"/>
        <label>1</label>
    </ligand>
</feature>
<feature type="binding site" evidence="1">
    <location>
        <position position="276"/>
    </location>
    <ligand>
        <name>Mn(2+)</name>
        <dbReference type="ChEBI" id="CHEBI:29035"/>
        <label>2</label>
    </ligand>
</feature>
<feature type="binding site" evidence="1">
    <location>
        <position position="399"/>
    </location>
    <ligand>
        <name>Mn(2+)</name>
        <dbReference type="ChEBI" id="CHEBI:29035"/>
        <label>1</label>
    </ligand>
</feature>
<feature type="binding site" evidence="1">
    <location>
        <position position="439"/>
    </location>
    <ligand>
        <name>Mn(2+)</name>
        <dbReference type="ChEBI" id="CHEBI:29035"/>
        <label>1</label>
    </ligand>
</feature>
<feature type="binding site" evidence="1">
    <location>
        <position position="439"/>
    </location>
    <ligand>
        <name>Mn(2+)</name>
        <dbReference type="ChEBI" id="CHEBI:29035"/>
        <label>2</label>
    </ligand>
</feature>
<organism>
    <name type="scientific">Uncinocarpus reesii (strain UAMH 1704)</name>
    <dbReference type="NCBI Taxonomy" id="336963"/>
    <lineage>
        <taxon>Eukaryota</taxon>
        <taxon>Fungi</taxon>
        <taxon>Dikarya</taxon>
        <taxon>Ascomycota</taxon>
        <taxon>Pezizomycotina</taxon>
        <taxon>Eurotiomycetes</taxon>
        <taxon>Eurotiomycetidae</taxon>
        <taxon>Onygenales</taxon>
        <taxon>Onygenaceae</taxon>
        <taxon>Uncinocarpus</taxon>
    </lineage>
</organism>
<accession>C4JF09</accession>
<reference key="1">
    <citation type="journal article" date="2009" name="Genome Res.">
        <title>Comparative genomic analyses of the human fungal pathogens Coccidioides and their relatives.</title>
        <authorList>
            <person name="Sharpton T.J."/>
            <person name="Stajich J.E."/>
            <person name="Rounsley S.D."/>
            <person name="Gardner M.J."/>
            <person name="Wortman J.R."/>
            <person name="Jordar V.S."/>
            <person name="Maiti R."/>
            <person name="Kodira C.D."/>
            <person name="Neafsey D.E."/>
            <person name="Zeng Q."/>
            <person name="Hung C.-Y."/>
            <person name="McMahan C."/>
            <person name="Muszewska A."/>
            <person name="Grynberg M."/>
            <person name="Mandel M.A."/>
            <person name="Kellner E.M."/>
            <person name="Barker B.M."/>
            <person name="Galgiani J.N."/>
            <person name="Orbach M.J."/>
            <person name="Kirkland T.N."/>
            <person name="Cole G.T."/>
            <person name="Henn M.R."/>
            <person name="Birren B.W."/>
            <person name="Taylor J.W."/>
        </authorList>
    </citation>
    <scope>NUCLEOTIDE SEQUENCE [LARGE SCALE GENOMIC DNA]</scope>
    <source>
        <strain>UAMH 1704</strain>
    </source>
</reference>
<dbReference type="EC" id="3.4.11.9"/>
<dbReference type="EMBL" id="CH476615">
    <property type="protein sequence ID" value="EEP76062.1"/>
    <property type="molecule type" value="Genomic_DNA"/>
</dbReference>
<dbReference type="RefSeq" id="XP_002541395.1">
    <property type="nucleotide sequence ID" value="XM_002541349.1"/>
</dbReference>
<dbReference type="SMR" id="C4JF09"/>
<dbReference type="FunCoup" id="C4JF09">
    <property type="interactions" value="366"/>
</dbReference>
<dbReference type="STRING" id="336963.C4JF09"/>
<dbReference type="GeneID" id="8437708"/>
<dbReference type="KEGG" id="ure:UREG_00910"/>
<dbReference type="VEuPathDB" id="FungiDB:UREG_00910"/>
<dbReference type="eggNOG" id="KOG2737">
    <property type="taxonomic scope" value="Eukaryota"/>
</dbReference>
<dbReference type="HOGENOM" id="CLU_017266_1_2_1"/>
<dbReference type="InParanoid" id="C4JF09"/>
<dbReference type="OMA" id="DAHALFF"/>
<dbReference type="OrthoDB" id="10261878at2759"/>
<dbReference type="Proteomes" id="UP000002058">
    <property type="component" value="Unassembled WGS sequence"/>
</dbReference>
<dbReference type="GO" id="GO:0030145">
    <property type="term" value="F:manganese ion binding"/>
    <property type="evidence" value="ECO:0007669"/>
    <property type="project" value="InterPro"/>
</dbReference>
<dbReference type="GO" id="GO:0070006">
    <property type="term" value="F:metalloaminopeptidase activity"/>
    <property type="evidence" value="ECO:0007669"/>
    <property type="project" value="InterPro"/>
</dbReference>
<dbReference type="GO" id="GO:0006508">
    <property type="term" value="P:proteolysis"/>
    <property type="evidence" value="ECO:0007669"/>
    <property type="project" value="UniProtKB-KW"/>
</dbReference>
<dbReference type="CDD" id="cd01087">
    <property type="entry name" value="Prolidase"/>
    <property type="match status" value="1"/>
</dbReference>
<dbReference type="FunFam" id="3.90.230.10:FF:000002">
    <property type="entry name" value="Xaa-Pro aminopeptidase 3"/>
    <property type="match status" value="1"/>
</dbReference>
<dbReference type="Gene3D" id="3.90.230.10">
    <property type="entry name" value="Creatinase/methionine aminopeptidase superfamily"/>
    <property type="match status" value="1"/>
</dbReference>
<dbReference type="Gene3D" id="3.40.350.10">
    <property type="entry name" value="Creatinase/prolidase N-terminal domain"/>
    <property type="match status" value="1"/>
</dbReference>
<dbReference type="InterPro" id="IPR007865">
    <property type="entry name" value="Aminopep_P_N"/>
</dbReference>
<dbReference type="InterPro" id="IPR029149">
    <property type="entry name" value="Creatin/AminoP/Spt16_N"/>
</dbReference>
<dbReference type="InterPro" id="IPR036005">
    <property type="entry name" value="Creatinase/aminopeptidase-like"/>
</dbReference>
<dbReference type="InterPro" id="IPR000994">
    <property type="entry name" value="Pept_M24"/>
</dbReference>
<dbReference type="InterPro" id="IPR052433">
    <property type="entry name" value="X-Pro_dipept-like"/>
</dbReference>
<dbReference type="PANTHER" id="PTHR43226">
    <property type="entry name" value="XAA-PRO AMINOPEPTIDASE 3"/>
    <property type="match status" value="1"/>
</dbReference>
<dbReference type="PANTHER" id="PTHR43226:SF1">
    <property type="entry name" value="XAA-PRO DIPEPTIDASE"/>
    <property type="match status" value="1"/>
</dbReference>
<dbReference type="Pfam" id="PF05195">
    <property type="entry name" value="AMP_N"/>
    <property type="match status" value="1"/>
</dbReference>
<dbReference type="Pfam" id="PF00557">
    <property type="entry name" value="Peptidase_M24"/>
    <property type="match status" value="1"/>
</dbReference>
<dbReference type="SMART" id="SM01011">
    <property type="entry name" value="AMP_N"/>
    <property type="match status" value="1"/>
</dbReference>
<dbReference type="SUPFAM" id="SSF55920">
    <property type="entry name" value="Creatinase/aminopeptidase"/>
    <property type="match status" value="1"/>
</dbReference>
<dbReference type="SUPFAM" id="SSF53092">
    <property type="entry name" value="Creatinase/prolidase N-terminal domain"/>
    <property type="match status" value="1"/>
</dbReference>
<evidence type="ECO:0000250" key="1"/>
<evidence type="ECO:0000305" key="2"/>
<keyword id="KW-0031">Aminopeptidase</keyword>
<keyword id="KW-0378">Hydrolase</keyword>
<keyword id="KW-0464">Manganese</keyword>
<keyword id="KW-0479">Metal-binding</keyword>
<keyword id="KW-0482">Metalloprotease</keyword>
<keyword id="KW-0645">Protease</keyword>
<keyword id="KW-1185">Reference proteome</keyword>
<protein>
    <recommendedName>
        <fullName>Probable Xaa-Pro aminopeptidase PEPP</fullName>
        <ecNumber>3.4.11.9</ecNumber>
    </recommendedName>
    <alternativeName>
        <fullName>Aminoacylproline aminopeptidase</fullName>
    </alternativeName>
    <alternativeName>
        <fullName>Prolidase</fullName>
    </alternativeName>
</protein>